<gene>
    <name type="primary">rpoC1</name>
</gene>
<name>RPOC1_FISMU</name>
<protein>
    <recommendedName>
        <fullName>DNA-directed RNA polymerase subunit gamma</fullName>
        <shortName>RNAP subunit gamma</shortName>
        <ecNumber>2.7.7.6</ecNumber>
    </recommendedName>
    <alternativeName>
        <fullName>RNA polymerase subunit gamma</fullName>
    </alternativeName>
    <alternativeName>
        <fullName>Transcriptase subunit gamma</fullName>
    </alternativeName>
</protein>
<sequence>EVTKPETINYRTLKPEMDGLFCERIFGPAKDWECHCGKYKRVRHRGIVCERCGVEVTESRVRRHRMGYIKLAAPVAHVWYLKGIPSYISILLDMPLRDVEQIVYFNSYVVLSPGNAETLSYKQLLSEDQWLEIEDQIYSEDSTLQGVEVGIGAEALLRLLADINLEQEAETLREEITTAKGQKRAKLIKRLRVIDNFIATGSK</sequence>
<accession>P42074</accession>
<comment type="function">
    <text evidence="1">DNA-dependent RNA polymerase catalyzes the transcription of DNA into RNA using the four ribonucleoside triphosphates as substrates.</text>
</comment>
<comment type="catalytic activity">
    <reaction evidence="2">
        <text>RNA(n) + a ribonucleoside 5'-triphosphate = RNA(n+1) + diphosphate</text>
        <dbReference type="Rhea" id="RHEA:21248"/>
        <dbReference type="Rhea" id="RHEA-COMP:14527"/>
        <dbReference type="Rhea" id="RHEA-COMP:17342"/>
        <dbReference type="ChEBI" id="CHEBI:33019"/>
        <dbReference type="ChEBI" id="CHEBI:61557"/>
        <dbReference type="ChEBI" id="CHEBI:140395"/>
        <dbReference type="EC" id="2.7.7.6"/>
    </reaction>
</comment>
<comment type="cofactor">
    <cofactor evidence="2">
        <name>Zn(2+)</name>
        <dbReference type="ChEBI" id="CHEBI:29105"/>
    </cofactor>
    <text evidence="2">Binds 1 Zn(2+) ion per subunit.</text>
</comment>
<comment type="subunit">
    <text evidence="1">In cyanobacteria the RNAP catalytic core is composed of 2 alpha, 1 beta, 1 beta', 1 gamma and 1 omega subunit. When a sigma factor is associated with the core the holoenzyme is formed, which can initiate transcription (By similarity).</text>
</comment>
<comment type="similarity">
    <text evidence="3">Belongs to the RNA polymerase beta' chain family. RpoC1 subfamily.</text>
</comment>
<organism>
    <name type="scientific">Fischerella muscicola</name>
    <dbReference type="NCBI Taxonomy" id="92938"/>
    <lineage>
        <taxon>Bacteria</taxon>
        <taxon>Bacillati</taxon>
        <taxon>Cyanobacteriota</taxon>
        <taxon>Cyanophyceae</taxon>
        <taxon>Nostocales</taxon>
        <taxon>Hapalosiphonaceae</taxon>
        <taxon>Fischerella</taxon>
    </lineage>
</organism>
<proteinExistence type="inferred from homology"/>
<feature type="chain" id="PRO_0000067841" description="DNA-directed RNA polymerase subunit gamma">
    <location>
        <begin position="1" status="less than"/>
        <end position="203" status="greater than"/>
    </location>
</feature>
<feature type="binding site" evidence="2">
    <location>
        <position position="34"/>
    </location>
    <ligand>
        <name>Zn(2+)</name>
        <dbReference type="ChEBI" id="CHEBI:29105"/>
    </ligand>
</feature>
<feature type="binding site" evidence="2">
    <location>
        <position position="36"/>
    </location>
    <ligand>
        <name>Zn(2+)</name>
        <dbReference type="ChEBI" id="CHEBI:29105"/>
    </ligand>
</feature>
<feature type="binding site" evidence="2">
    <location>
        <position position="49"/>
    </location>
    <ligand>
        <name>Zn(2+)</name>
        <dbReference type="ChEBI" id="CHEBI:29105"/>
    </ligand>
</feature>
<feature type="binding site" evidence="2">
    <location>
        <position position="52"/>
    </location>
    <ligand>
        <name>Zn(2+)</name>
        <dbReference type="ChEBI" id="CHEBI:29105"/>
    </ligand>
</feature>
<feature type="non-terminal residue">
    <location>
        <position position="1"/>
    </location>
</feature>
<feature type="non-terminal residue">
    <location>
        <position position="203"/>
    </location>
</feature>
<keyword id="KW-0240">DNA-directed RNA polymerase</keyword>
<keyword id="KW-0479">Metal-binding</keyword>
<keyword id="KW-0548">Nucleotidyltransferase</keyword>
<keyword id="KW-0804">Transcription</keyword>
<keyword id="KW-0808">Transferase</keyword>
<keyword id="KW-0862">Zinc</keyword>
<dbReference type="EC" id="2.7.7.6"/>
<dbReference type="EMBL" id="Z11153">
    <property type="protein sequence ID" value="CAA77504.1"/>
    <property type="molecule type" value="Genomic_DNA"/>
</dbReference>
<dbReference type="SMR" id="P42074"/>
<dbReference type="GO" id="GO:0000428">
    <property type="term" value="C:DNA-directed RNA polymerase complex"/>
    <property type="evidence" value="ECO:0007669"/>
    <property type="project" value="UniProtKB-KW"/>
</dbReference>
<dbReference type="GO" id="GO:0003677">
    <property type="term" value="F:DNA binding"/>
    <property type="evidence" value="ECO:0007669"/>
    <property type="project" value="InterPro"/>
</dbReference>
<dbReference type="GO" id="GO:0003899">
    <property type="term" value="F:DNA-directed RNA polymerase activity"/>
    <property type="evidence" value="ECO:0007669"/>
    <property type="project" value="UniProtKB-EC"/>
</dbReference>
<dbReference type="GO" id="GO:0046872">
    <property type="term" value="F:metal ion binding"/>
    <property type="evidence" value="ECO:0007669"/>
    <property type="project" value="UniProtKB-KW"/>
</dbReference>
<dbReference type="GO" id="GO:0006351">
    <property type="term" value="P:DNA-templated transcription"/>
    <property type="evidence" value="ECO:0007669"/>
    <property type="project" value="InterPro"/>
</dbReference>
<dbReference type="Gene3D" id="4.10.860.120">
    <property type="entry name" value="RNA polymerase II, clamp domain"/>
    <property type="match status" value="1"/>
</dbReference>
<dbReference type="InterPro" id="IPR045867">
    <property type="entry name" value="DNA-dir_RpoC_beta_prime"/>
</dbReference>
<dbReference type="InterPro" id="IPR007080">
    <property type="entry name" value="RNA_pol_Rpb1_1"/>
</dbReference>
<dbReference type="InterPro" id="IPR044893">
    <property type="entry name" value="RNA_pol_Rpb1_clamp_domain"/>
</dbReference>
<dbReference type="PANTHER" id="PTHR19376">
    <property type="entry name" value="DNA-DIRECTED RNA POLYMERASE"/>
    <property type="match status" value="1"/>
</dbReference>
<dbReference type="PANTHER" id="PTHR19376:SF54">
    <property type="entry name" value="DNA-DIRECTED RNA POLYMERASE SUBUNIT BETA"/>
    <property type="match status" value="1"/>
</dbReference>
<dbReference type="Pfam" id="PF04997">
    <property type="entry name" value="RNA_pol_Rpb1_1"/>
    <property type="match status" value="1"/>
</dbReference>
<dbReference type="SUPFAM" id="SSF64484">
    <property type="entry name" value="beta and beta-prime subunits of DNA dependent RNA-polymerase"/>
    <property type="match status" value="1"/>
</dbReference>
<evidence type="ECO:0000250" key="1"/>
<evidence type="ECO:0000250" key="2">
    <source>
        <dbReference type="UniProtKB" id="P0A8T7"/>
    </source>
</evidence>
<evidence type="ECO:0000305" key="3"/>
<reference key="1">
    <citation type="journal article" date="1992" name="Nature">
        <title>Multiple evolutionary origins of prochlorophytes, the chlorophyll b-containing prokaryotes.</title>
        <authorList>
            <person name="Palenik B."/>
            <person name="Haselkorn R."/>
        </authorList>
    </citation>
    <scope>NUCLEOTIDE SEQUENCE [GENOMIC DNA]</scope>
    <source>
        <strain>PCC 7414</strain>
    </source>
</reference>